<accession>Q9YBG9</accession>
<sequence length="101" mass="11470">MMDESLCGGLPPEICEQLSVEEQIIKIRLEKRRFGREVTIIEGINEKEFNLKKLASTLKSRLATGGTAKNGRIELQGDHRHRVKKILVELGFPEENITIID</sequence>
<name>SUI1_AERPE</name>
<keyword id="KW-0648">Protein biosynthesis</keyword>
<keyword id="KW-1185">Reference proteome</keyword>
<keyword id="KW-0810">Translation regulation</keyword>
<protein>
    <recommendedName>
        <fullName evidence="1">Protein translation factor SUI1 homolog</fullName>
    </recommendedName>
</protein>
<reference key="1">
    <citation type="journal article" date="1999" name="DNA Res.">
        <title>Complete genome sequence of an aerobic hyper-thermophilic crenarchaeon, Aeropyrum pernix K1.</title>
        <authorList>
            <person name="Kawarabayasi Y."/>
            <person name="Hino Y."/>
            <person name="Horikawa H."/>
            <person name="Yamazaki S."/>
            <person name="Haikawa Y."/>
            <person name="Jin-no K."/>
            <person name="Takahashi M."/>
            <person name="Sekine M."/>
            <person name="Baba S."/>
            <person name="Ankai A."/>
            <person name="Kosugi H."/>
            <person name="Hosoyama A."/>
            <person name="Fukui S."/>
            <person name="Nagai Y."/>
            <person name="Nishijima K."/>
            <person name="Nakazawa H."/>
            <person name="Takamiya M."/>
            <person name="Masuda S."/>
            <person name="Funahashi T."/>
            <person name="Tanaka T."/>
            <person name="Kudoh Y."/>
            <person name="Yamazaki J."/>
            <person name="Kushida N."/>
            <person name="Oguchi A."/>
            <person name="Aoki K."/>
            <person name="Kubota K."/>
            <person name="Nakamura Y."/>
            <person name="Nomura N."/>
            <person name="Sako Y."/>
            <person name="Kikuchi H."/>
        </authorList>
    </citation>
    <scope>NUCLEOTIDE SEQUENCE [LARGE SCALE GENOMIC DNA]</scope>
    <source>
        <strain>ATCC 700893 / DSM 11879 / JCM 9820 / NBRC 100138 / K1</strain>
    </source>
</reference>
<evidence type="ECO:0000255" key="1">
    <source>
        <dbReference type="HAMAP-Rule" id="MF_00604"/>
    </source>
</evidence>
<proteinExistence type="inferred from homology"/>
<feature type="chain" id="PRO_0000130575" description="Protein translation factor SUI1 homolog">
    <location>
        <begin position="1"/>
        <end position="101"/>
    </location>
</feature>
<gene>
    <name type="ordered locus">APE_1629</name>
</gene>
<organism>
    <name type="scientific">Aeropyrum pernix (strain ATCC 700893 / DSM 11879 / JCM 9820 / NBRC 100138 / K1)</name>
    <dbReference type="NCBI Taxonomy" id="272557"/>
    <lineage>
        <taxon>Archaea</taxon>
        <taxon>Thermoproteota</taxon>
        <taxon>Thermoprotei</taxon>
        <taxon>Desulfurococcales</taxon>
        <taxon>Desulfurococcaceae</taxon>
        <taxon>Aeropyrum</taxon>
    </lineage>
</organism>
<dbReference type="EMBL" id="BA000002">
    <property type="protein sequence ID" value="BAA80629.1"/>
    <property type="molecule type" value="Genomic_DNA"/>
</dbReference>
<dbReference type="PIR" id="H72542">
    <property type="entry name" value="H72542"/>
</dbReference>
<dbReference type="SMR" id="Q9YBG9"/>
<dbReference type="STRING" id="272557.APE_1629"/>
<dbReference type="EnsemblBacteria" id="BAA80629">
    <property type="protein sequence ID" value="BAA80629"/>
    <property type="gene ID" value="APE_1629"/>
</dbReference>
<dbReference type="KEGG" id="ape:APE_1629"/>
<dbReference type="PATRIC" id="fig|272557.25.peg.1100"/>
<dbReference type="eggNOG" id="arCOG04223">
    <property type="taxonomic scope" value="Archaea"/>
</dbReference>
<dbReference type="Proteomes" id="UP000002518">
    <property type="component" value="Chromosome"/>
</dbReference>
<dbReference type="GO" id="GO:0003729">
    <property type="term" value="F:mRNA binding"/>
    <property type="evidence" value="ECO:0007669"/>
    <property type="project" value="TreeGrafter"/>
</dbReference>
<dbReference type="GO" id="GO:0003743">
    <property type="term" value="F:translation initiation factor activity"/>
    <property type="evidence" value="ECO:0007669"/>
    <property type="project" value="InterPro"/>
</dbReference>
<dbReference type="GO" id="GO:0001731">
    <property type="term" value="P:formation of translation preinitiation complex"/>
    <property type="evidence" value="ECO:0007669"/>
    <property type="project" value="TreeGrafter"/>
</dbReference>
<dbReference type="GO" id="GO:0006417">
    <property type="term" value="P:regulation of translation"/>
    <property type="evidence" value="ECO:0007669"/>
    <property type="project" value="UniProtKB-UniRule"/>
</dbReference>
<dbReference type="GO" id="GO:0002188">
    <property type="term" value="P:translation reinitiation"/>
    <property type="evidence" value="ECO:0007669"/>
    <property type="project" value="TreeGrafter"/>
</dbReference>
<dbReference type="CDD" id="cd11567">
    <property type="entry name" value="YciH_like"/>
    <property type="match status" value="1"/>
</dbReference>
<dbReference type="Gene3D" id="3.30.780.10">
    <property type="entry name" value="SUI1-like domain"/>
    <property type="match status" value="1"/>
</dbReference>
<dbReference type="HAMAP" id="MF_00604">
    <property type="entry name" value="SUI1"/>
    <property type="match status" value="1"/>
</dbReference>
<dbReference type="InterPro" id="IPR050318">
    <property type="entry name" value="DENR/SUI1_TIF"/>
</dbReference>
<dbReference type="InterPro" id="IPR001950">
    <property type="entry name" value="SUI1"/>
</dbReference>
<dbReference type="InterPro" id="IPR022851">
    <property type="entry name" value="SUI1_arc"/>
</dbReference>
<dbReference type="InterPro" id="IPR005872">
    <property type="entry name" value="SUI1_arc_bac"/>
</dbReference>
<dbReference type="InterPro" id="IPR036877">
    <property type="entry name" value="SUI1_dom_sf"/>
</dbReference>
<dbReference type="NCBIfam" id="NF002096">
    <property type="entry name" value="PRK00939.1"/>
    <property type="match status" value="1"/>
</dbReference>
<dbReference type="NCBIfam" id="TIGR01158">
    <property type="entry name" value="SUI1_rel"/>
    <property type="match status" value="1"/>
</dbReference>
<dbReference type="PANTHER" id="PTHR12789:SF0">
    <property type="entry name" value="DENSITY-REGULATED PROTEIN"/>
    <property type="match status" value="1"/>
</dbReference>
<dbReference type="PANTHER" id="PTHR12789">
    <property type="entry name" value="DENSITY-REGULATED PROTEIN HOMOLOG"/>
    <property type="match status" value="1"/>
</dbReference>
<dbReference type="Pfam" id="PF01253">
    <property type="entry name" value="SUI1"/>
    <property type="match status" value="1"/>
</dbReference>
<dbReference type="SUPFAM" id="SSF55159">
    <property type="entry name" value="eIF1-like"/>
    <property type="match status" value="1"/>
</dbReference>
<dbReference type="PROSITE" id="PS50296">
    <property type="entry name" value="SUI1"/>
    <property type="match status" value="1"/>
</dbReference>
<comment type="similarity">
    <text evidence="1">Belongs to the SUI1 family.</text>
</comment>